<gene>
    <name evidence="1" type="primary">darP</name>
    <name type="ordered locus">APL_0730</name>
</gene>
<dbReference type="EMBL" id="CP000569">
    <property type="protein sequence ID" value="ABN73830.1"/>
    <property type="molecule type" value="Genomic_DNA"/>
</dbReference>
<dbReference type="SMR" id="A3N094"/>
<dbReference type="STRING" id="416269.APL_0730"/>
<dbReference type="EnsemblBacteria" id="ABN73830">
    <property type="protein sequence ID" value="ABN73830"/>
    <property type="gene ID" value="APL_0730"/>
</dbReference>
<dbReference type="KEGG" id="apl:APL_0730"/>
<dbReference type="eggNOG" id="COG3028">
    <property type="taxonomic scope" value="Bacteria"/>
</dbReference>
<dbReference type="HOGENOM" id="CLU_106757_2_0_6"/>
<dbReference type="Proteomes" id="UP000001432">
    <property type="component" value="Chromosome"/>
</dbReference>
<dbReference type="GO" id="GO:0005829">
    <property type="term" value="C:cytosol"/>
    <property type="evidence" value="ECO:0007669"/>
    <property type="project" value="TreeGrafter"/>
</dbReference>
<dbReference type="GO" id="GO:0043022">
    <property type="term" value="F:ribosome binding"/>
    <property type="evidence" value="ECO:0007669"/>
    <property type="project" value="UniProtKB-UniRule"/>
</dbReference>
<dbReference type="GO" id="GO:0019843">
    <property type="term" value="F:rRNA binding"/>
    <property type="evidence" value="ECO:0007669"/>
    <property type="project" value="UniProtKB-UniRule"/>
</dbReference>
<dbReference type="GO" id="GO:1902626">
    <property type="term" value="P:assembly of large subunit precursor of preribosome"/>
    <property type="evidence" value="ECO:0007669"/>
    <property type="project" value="UniProtKB-UniRule"/>
</dbReference>
<dbReference type="CDD" id="cd16331">
    <property type="entry name" value="YjgA-like"/>
    <property type="match status" value="1"/>
</dbReference>
<dbReference type="FunFam" id="1.10.60.30:FF:000001">
    <property type="entry name" value="UPF0307 protein YjgA"/>
    <property type="match status" value="1"/>
</dbReference>
<dbReference type="Gene3D" id="1.10.60.30">
    <property type="entry name" value="PSPTO4464-like domains"/>
    <property type="match status" value="2"/>
</dbReference>
<dbReference type="HAMAP" id="MF_00765">
    <property type="entry name" value="DarP"/>
    <property type="match status" value="1"/>
</dbReference>
<dbReference type="InterPro" id="IPR006839">
    <property type="entry name" value="DarP"/>
</dbReference>
<dbReference type="InterPro" id="IPR023153">
    <property type="entry name" value="DarP_sf"/>
</dbReference>
<dbReference type="NCBIfam" id="NF003593">
    <property type="entry name" value="PRK05255.1-1"/>
    <property type="match status" value="1"/>
</dbReference>
<dbReference type="PANTHER" id="PTHR38101">
    <property type="entry name" value="UPF0307 PROTEIN YJGA"/>
    <property type="match status" value="1"/>
</dbReference>
<dbReference type="PANTHER" id="PTHR38101:SF1">
    <property type="entry name" value="UPF0307 PROTEIN YJGA"/>
    <property type="match status" value="1"/>
</dbReference>
<dbReference type="Pfam" id="PF04751">
    <property type="entry name" value="DarP"/>
    <property type="match status" value="1"/>
</dbReference>
<dbReference type="PIRSF" id="PIRSF016183">
    <property type="entry name" value="UCP016183"/>
    <property type="match status" value="1"/>
</dbReference>
<dbReference type="SUPFAM" id="SSF158710">
    <property type="entry name" value="PSPTO4464-like"/>
    <property type="match status" value="1"/>
</dbReference>
<organism>
    <name type="scientific">Actinobacillus pleuropneumoniae serotype 5b (strain L20)</name>
    <dbReference type="NCBI Taxonomy" id="416269"/>
    <lineage>
        <taxon>Bacteria</taxon>
        <taxon>Pseudomonadati</taxon>
        <taxon>Pseudomonadota</taxon>
        <taxon>Gammaproteobacteria</taxon>
        <taxon>Pasteurellales</taxon>
        <taxon>Pasteurellaceae</taxon>
        <taxon>Actinobacillus</taxon>
    </lineage>
</organism>
<name>DARP_ACTP2</name>
<comment type="function">
    <text evidence="1">Member of a network of 50S ribosomal subunit biogenesis factors which assembles along the 30S-50S interface, preventing incorrect 23S rRNA structures from forming. Promotes peptidyl transferase center (PTC) maturation.</text>
</comment>
<comment type="subcellular location">
    <subcellularLocation>
        <location evidence="1">Cytoplasm</location>
    </subcellularLocation>
    <text evidence="1">Associates with late stage pre-50S ribosomal subunits.</text>
</comment>
<comment type="similarity">
    <text evidence="1">Belongs to the DarP family.</text>
</comment>
<protein>
    <recommendedName>
        <fullName evidence="1">Dual-action ribosomal maturation protein DarP</fullName>
    </recommendedName>
    <alternativeName>
        <fullName evidence="1">Large ribosomal subunit assembly factor DarP</fullName>
    </alternativeName>
</protein>
<feature type="chain" id="PRO_1000046791" description="Dual-action ribosomal maturation protein DarP">
    <location>
        <begin position="1"/>
        <end position="176"/>
    </location>
</feature>
<sequence length="176" mass="20910">MAKKRSKNEIDWTDEEEEIIWVSKSEIKRDSEHLKKLGAELIELTPQNLEKIPLDDDLKDAIRQAQSFKLEARRRQIQFIGKLLRNRDPEPIQEALDKVKNRHNQQQALLHKLELVRDQLVNMGDSSLEHLLTEHPQLDRQHLRNLIRGAQKEREANKPPKNYREIFQYLKTEIAE</sequence>
<keyword id="KW-0963">Cytoplasm</keyword>
<keyword id="KW-1185">Reference proteome</keyword>
<keyword id="KW-0690">Ribosome biogenesis</keyword>
<keyword id="KW-0694">RNA-binding</keyword>
<keyword id="KW-0699">rRNA-binding</keyword>
<evidence type="ECO:0000255" key="1">
    <source>
        <dbReference type="HAMAP-Rule" id="MF_00765"/>
    </source>
</evidence>
<reference key="1">
    <citation type="journal article" date="2008" name="J. Bacteriol.">
        <title>The complete genome sequence of Actinobacillus pleuropneumoniae L20 (serotype 5b).</title>
        <authorList>
            <person name="Foote S.J."/>
            <person name="Bosse J.T."/>
            <person name="Bouevitch A.B."/>
            <person name="Langford P.R."/>
            <person name="Young N.M."/>
            <person name="Nash J.H.E."/>
        </authorList>
    </citation>
    <scope>NUCLEOTIDE SEQUENCE [LARGE SCALE GENOMIC DNA]</scope>
    <source>
        <strain>L20</strain>
    </source>
</reference>
<accession>A3N094</accession>
<proteinExistence type="inferred from homology"/>